<feature type="transit peptide" description="Chloroplast and mitochondrion" evidence="11">
    <location>
        <begin position="1"/>
        <end position="51"/>
    </location>
</feature>
<feature type="chain" id="PRO_0000018621" description="Monodehydroascorbate reductase, chloroplastic/mitochondrial">
    <location>
        <begin position="52"/>
        <end position="493"/>
    </location>
</feature>
<feature type="binding site" evidence="1">
    <location>
        <begin position="68"/>
        <end position="71"/>
    </location>
    <ligand>
        <name>FAD</name>
        <dbReference type="ChEBI" id="CHEBI:57692"/>
    </ligand>
</feature>
<feature type="binding site" evidence="1">
    <location>
        <position position="95"/>
    </location>
    <ligand>
        <name>FAD</name>
        <dbReference type="ChEBI" id="CHEBI:57692"/>
    </ligand>
</feature>
<feature type="binding site" evidence="1">
    <location>
        <position position="102"/>
    </location>
    <ligand>
        <name>FAD</name>
        <dbReference type="ChEBI" id="CHEBI:57692"/>
    </ligand>
</feature>
<feature type="binding site" evidence="1">
    <location>
        <position position="107"/>
    </location>
    <ligand>
        <name>FAD</name>
        <dbReference type="ChEBI" id="CHEBI:57692"/>
    </ligand>
</feature>
<feature type="binding site" evidence="1">
    <location>
        <begin position="201"/>
        <end position="202"/>
    </location>
    <ligand>
        <name>FAD</name>
        <dbReference type="ChEBI" id="CHEBI:57692"/>
    </ligand>
</feature>
<feature type="binding site" evidence="1">
    <location>
        <begin position="224"/>
        <end position="230"/>
    </location>
    <ligand>
        <name>NAD(+)</name>
        <dbReference type="ChEBI" id="CHEBI:57540"/>
    </ligand>
</feature>
<feature type="binding site" evidence="1">
    <location>
        <begin position="226"/>
        <end position="230"/>
    </location>
    <ligand>
        <name>NADP(+)</name>
        <dbReference type="ChEBI" id="CHEBI:58349"/>
    </ligand>
</feature>
<feature type="binding site" evidence="1">
    <location>
        <position position="248"/>
    </location>
    <ligand>
        <name>NAD(+)</name>
        <dbReference type="ChEBI" id="CHEBI:57540"/>
    </ligand>
</feature>
<feature type="binding site" evidence="1">
    <location>
        <position position="254"/>
    </location>
    <ligand>
        <name>NAD(+)</name>
        <dbReference type="ChEBI" id="CHEBI:57540"/>
    </ligand>
</feature>
<feature type="binding site" evidence="1">
    <location>
        <position position="254"/>
    </location>
    <ligand>
        <name>NADP(+)</name>
        <dbReference type="ChEBI" id="CHEBI:58349"/>
    </ligand>
</feature>
<feature type="binding site" evidence="1">
    <location>
        <position position="313"/>
    </location>
    <ligand>
        <name>NAD(+)</name>
        <dbReference type="ChEBI" id="CHEBI:57540"/>
    </ligand>
</feature>
<feature type="binding site" evidence="1">
    <location>
        <position position="313"/>
    </location>
    <ligand>
        <name>NADP(+)</name>
        <dbReference type="ChEBI" id="CHEBI:58349"/>
    </ligand>
</feature>
<feature type="binding site" evidence="1">
    <location>
        <position position="351"/>
    </location>
    <ligand>
        <name>FAD</name>
        <dbReference type="ChEBI" id="CHEBI:57692"/>
    </ligand>
</feature>
<feature type="binding site" evidence="1">
    <location>
        <begin position="367"/>
        <end position="368"/>
    </location>
    <ligand>
        <name>NAD(+)</name>
        <dbReference type="ChEBI" id="CHEBI:57540"/>
    </ligand>
</feature>
<feature type="binding site" evidence="1">
    <location>
        <begin position="367"/>
        <end position="368"/>
    </location>
    <ligand>
        <name>NADP(+)</name>
        <dbReference type="ChEBI" id="CHEBI:58349"/>
    </ligand>
</feature>
<feature type="binding site" evidence="1">
    <location>
        <position position="369"/>
    </location>
    <ligand>
        <name>FAD</name>
        <dbReference type="ChEBI" id="CHEBI:57692"/>
    </ligand>
</feature>
<feature type="binding site" evidence="1">
    <location>
        <position position="373"/>
    </location>
    <ligand>
        <name>L-ascorbate</name>
        <dbReference type="ChEBI" id="CHEBI:38290"/>
    </ligand>
</feature>
<feature type="binding site" evidence="1">
    <location>
        <position position="398"/>
    </location>
    <ligand>
        <name>FAD</name>
        <dbReference type="ChEBI" id="CHEBI:57692"/>
    </ligand>
</feature>
<feature type="binding site" evidence="1">
    <location>
        <position position="398"/>
    </location>
    <ligand>
        <name>NAD(+)</name>
        <dbReference type="ChEBI" id="CHEBI:57540"/>
    </ligand>
</feature>
<feature type="binding site" evidence="1">
    <location>
        <position position="398"/>
    </location>
    <ligand>
        <name>NADP(+)</name>
        <dbReference type="ChEBI" id="CHEBI:58349"/>
    </ligand>
</feature>
<feature type="binding site" evidence="1">
    <location>
        <position position="400"/>
    </location>
    <ligand>
        <name>L-ascorbate</name>
        <dbReference type="ChEBI" id="CHEBI:38290"/>
    </ligand>
</feature>
<feature type="splice variant" id="VSP_011360" description="In isoform MDAR6." evidence="7">
    <location>
        <begin position="1"/>
        <end position="7"/>
    </location>
</feature>
<feature type="sequence conflict" description="In Ref. 1; BAA12349." evidence="10" ref="1">
    <original>Y</original>
    <variation>H</variation>
    <location>
        <position position="109"/>
    </location>
</feature>
<keyword id="KW-0877">Alternative promoter usage</keyword>
<keyword id="KW-0150">Chloroplast</keyword>
<keyword id="KW-0274">FAD</keyword>
<keyword id="KW-0285">Flavoprotein</keyword>
<keyword id="KW-0496">Mitochondrion</keyword>
<keyword id="KW-0520">NAD</keyword>
<keyword id="KW-0521">NADP</keyword>
<keyword id="KW-0560">Oxidoreductase</keyword>
<keyword id="KW-0934">Plastid</keyword>
<keyword id="KW-0676">Redox-active center</keyword>
<keyword id="KW-1185">Reference proteome</keyword>
<keyword id="KW-0809">Transit peptide</keyword>
<dbReference type="EC" id="1.6.5.4" evidence="5"/>
<dbReference type="EMBL" id="D84417">
    <property type="protein sequence ID" value="BAA12349.2"/>
    <property type="molecule type" value="mRNA"/>
</dbReference>
<dbReference type="EMBL" id="AC010852">
    <property type="protein sequence ID" value="AAG52455.1"/>
    <property type="molecule type" value="Genomic_DNA"/>
</dbReference>
<dbReference type="EMBL" id="CP002684">
    <property type="protein sequence ID" value="AEE34168.1"/>
    <property type="molecule type" value="Genomic_DNA"/>
</dbReference>
<dbReference type="EMBL" id="CP002684">
    <property type="protein sequence ID" value="AEE34171.1"/>
    <property type="molecule type" value="Genomic_DNA"/>
</dbReference>
<dbReference type="EMBL" id="AY034934">
    <property type="protein sequence ID" value="AAK59441.1"/>
    <property type="molecule type" value="mRNA"/>
</dbReference>
<dbReference type="EMBL" id="AY142572">
    <property type="protein sequence ID" value="AAN13141.1"/>
    <property type="molecule type" value="mRNA"/>
</dbReference>
<dbReference type="EMBL" id="BT000667">
    <property type="protein sequence ID" value="AAN31814.1"/>
    <property type="molecule type" value="mRNA"/>
</dbReference>
<dbReference type="PIR" id="E96664">
    <property type="entry name" value="E96664"/>
</dbReference>
<dbReference type="RefSeq" id="NP_564818.1">
    <molecule id="P92947-2"/>
    <property type="nucleotide sequence ID" value="NM_105067.4"/>
</dbReference>
<dbReference type="RefSeq" id="NP_849839.1">
    <molecule id="P92947-1"/>
    <property type="nucleotide sequence ID" value="NM_179508.3"/>
</dbReference>
<dbReference type="SMR" id="P92947"/>
<dbReference type="BioGRID" id="27918">
    <property type="interactions" value="16"/>
</dbReference>
<dbReference type="FunCoup" id="P92947">
    <property type="interactions" value="1026"/>
</dbReference>
<dbReference type="IntAct" id="P92947">
    <property type="interactions" value="2"/>
</dbReference>
<dbReference type="STRING" id="3702.P92947"/>
<dbReference type="iPTMnet" id="P92947"/>
<dbReference type="PaxDb" id="3702-AT1G63940.2"/>
<dbReference type="ProteomicsDB" id="238765">
    <molecule id="P92947-1"/>
</dbReference>
<dbReference type="EnsemblPlants" id="AT1G63940.1">
    <molecule id="P92947-2"/>
    <property type="protein sequence ID" value="AT1G63940.1"/>
    <property type="gene ID" value="AT1G63940"/>
</dbReference>
<dbReference type="EnsemblPlants" id="AT1G63940.2">
    <molecule id="P92947-1"/>
    <property type="protein sequence ID" value="AT1G63940.2"/>
    <property type="gene ID" value="AT1G63940"/>
</dbReference>
<dbReference type="GeneID" id="842697"/>
<dbReference type="Gramene" id="AT1G63940.1">
    <molecule id="P92947-2"/>
    <property type="protein sequence ID" value="AT1G63940.1"/>
    <property type="gene ID" value="AT1G63940"/>
</dbReference>
<dbReference type="Gramene" id="AT1G63940.2">
    <molecule id="P92947-1"/>
    <property type="protein sequence ID" value="AT1G63940.2"/>
    <property type="gene ID" value="AT1G63940"/>
</dbReference>
<dbReference type="KEGG" id="ath:AT1G63940"/>
<dbReference type="Araport" id="AT1G63940"/>
<dbReference type="TAIR" id="AT1G63940">
    <property type="gene designation" value="MDAR6"/>
</dbReference>
<dbReference type="eggNOG" id="KOG1336">
    <property type="taxonomic scope" value="Eukaryota"/>
</dbReference>
<dbReference type="InParanoid" id="P92947"/>
<dbReference type="PhylomeDB" id="P92947"/>
<dbReference type="BioCyc" id="ARA:AT1G63940-MONOMER"/>
<dbReference type="BRENDA" id="1.6.5.4">
    <property type="organism ID" value="399"/>
</dbReference>
<dbReference type="SABIO-RK" id="P92947"/>
<dbReference type="CD-CODE" id="4299E36E">
    <property type="entry name" value="Nucleolus"/>
</dbReference>
<dbReference type="PRO" id="PR:P92947"/>
<dbReference type="Proteomes" id="UP000006548">
    <property type="component" value="Chromosome 1"/>
</dbReference>
<dbReference type="ExpressionAtlas" id="P92947">
    <property type="expression patterns" value="baseline and differential"/>
</dbReference>
<dbReference type="GO" id="GO:0009507">
    <property type="term" value="C:chloroplast"/>
    <property type="evidence" value="ECO:0007005"/>
    <property type="project" value="TAIR"/>
</dbReference>
<dbReference type="GO" id="GO:0009570">
    <property type="term" value="C:chloroplast stroma"/>
    <property type="evidence" value="ECO:0007005"/>
    <property type="project" value="TAIR"/>
</dbReference>
<dbReference type="GO" id="GO:0005739">
    <property type="term" value="C:mitochondrion"/>
    <property type="evidence" value="ECO:0000314"/>
    <property type="project" value="TAIR"/>
</dbReference>
<dbReference type="GO" id="GO:0005634">
    <property type="term" value="C:nucleus"/>
    <property type="evidence" value="ECO:0007005"/>
    <property type="project" value="TAIR"/>
</dbReference>
<dbReference type="GO" id="GO:0010319">
    <property type="term" value="C:stromule"/>
    <property type="evidence" value="ECO:0000314"/>
    <property type="project" value="TAIR"/>
</dbReference>
<dbReference type="GO" id="GO:0005524">
    <property type="term" value="F:ATP binding"/>
    <property type="evidence" value="ECO:0007005"/>
    <property type="project" value="TAIR"/>
</dbReference>
<dbReference type="GO" id="GO:0016656">
    <property type="term" value="F:monodehydroascorbate reductase (NADH) activity"/>
    <property type="evidence" value="ECO:0007669"/>
    <property type="project" value="UniProtKB-EC"/>
</dbReference>
<dbReference type="GO" id="GO:0009409">
    <property type="term" value="P:response to cold"/>
    <property type="evidence" value="ECO:0000270"/>
    <property type="project" value="TAIR"/>
</dbReference>
<dbReference type="FunFam" id="3.30.390.30:FF:000018">
    <property type="entry name" value="Monodehydroascorbate reductase"/>
    <property type="match status" value="1"/>
</dbReference>
<dbReference type="Gene3D" id="3.30.390.30">
    <property type="match status" value="1"/>
</dbReference>
<dbReference type="Gene3D" id="3.50.50.60">
    <property type="entry name" value="FAD/NAD(P)-binding domain"/>
    <property type="match status" value="2"/>
</dbReference>
<dbReference type="InterPro" id="IPR050446">
    <property type="entry name" value="FAD-oxidoreductase/Apoptosis"/>
</dbReference>
<dbReference type="InterPro" id="IPR036188">
    <property type="entry name" value="FAD/NAD-bd_sf"/>
</dbReference>
<dbReference type="InterPro" id="IPR023753">
    <property type="entry name" value="FAD/NAD-binding_dom"/>
</dbReference>
<dbReference type="InterPro" id="IPR016156">
    <property type="entry name" value="FAD/NAD-linked_Rdtase_dimer_sf"/>
</dbReference>
<dbReference type="InterPro" id="IPR048618">
    <property type="entry name" value="MDHAR3-like_C"/>
</dbReference>
<dbReference type="PANTHER" id="PTHR43557">
    <property type="entry name" value="APOPTOSIS-INDUCING FACTOR 1"/>
    <property type="match status" value="1"/>
</dbReference>
<dbReference type="PANTHER" id="PTHR43557:SF6">
    <property type="entry name" value="MONODEHYDROASCORBATE REDUCTASE, CHLOROPLASTIC_MITOCHONDRIAL"/>
    <property type="match status" value="1"/>
</dbReference>
<dbReference type="Pfam" id="PF21791">
    <property type="entry name" value="MDHAR3-like_C"/>
    <property type="match status" value="1"/>
</dbReference>
<dbReference type="Pfam" id="PF07992">
    <property type="entry name" value="Pyr_redox_2"/>
    <property type="match status" value="1"/>
</dbReference>
<dbReference type="PRINTS" id="PR00368">
    <property type="entry name" value="FADPNR"/>
</dbReference>
<dbReference type="PRINTS" id="PR00411">
    <property type="entry name" value="PNDRDTASEI"/>
</dbReference>
<dbReference type="SUPFAM" id="SSF51905">
    <property type="entry name" value="FAD/NAD(P)-binding domain"/>
    <property type="match status" value="2"/>
</dbReference>
<proteinExistence type="evidence at protein level"/>
<reference key="1">
    <citation type="submission" date="1996-04" db="EMBL/GenBank/DDBJ databases">
        <title>cDNA of chloroplastic monodehydroascorbate radical reductase from Arabidopsis thaliana.</title>
        <authorList>
            <person name="Hossain A."/>
            <person name="Miyake C."/>
            <person name="Aoki H."/>
            <person name="Matsuo M."/>
            <person name="Yamaguchi T."/>
            <person name="Nishimura M."/>
            <person name="Ida S."/>
            <person name="Asada K."/>
        </authorList>
    </citation>
    <scope>NUCLEOTIDE SEQUENCE [MRNA] (ISOFORM MDAR5)</scope>
</reference>
<reference key="2">
    <citation type="journal article" date="2000" name="Nature">
        <title>Sequence and analysis of chromosome 1 of the plant Arabidopsis thaliana.</title>
        <authorList>
            <person name="Theologis A."/>
            <person name="Ecker J.R."/>
            <person name="Palm C.J."/>
            <person name="Federspiel N.A."/>
            <person name="Kaul S."/>
            <person name="White O."/>
            <person name="Alonso J."/>
            <person name="Altafi H."/>
            <person name="Araujo R."/>
            <person name="Bowman C.L."/>
            <person name="Brooks S.Y."/>
            <person name="Buehler E."/>
            <person name="Chan A."/>
            <person name="Chao Q."/>
            <person name="Chen H."/>
            <person name="Cheuk R.F."/>
            <person name="Chin C.W."/>
            <person name="Chung M.K."/>
            <person name="Conn L."/>
            <person name="Conway A.B."/>
            <person name="Conway A.R."/>
            <person name="Creasy T.H."/>
            <person name="Dewar K."/>
            <person name="Dunn P."/>
            <person name="Etgu P."/>
            <person name="Feldblyum T.V."/>
            <person name="Feng J.-D."/>
            <person name="Fong B."/>
            <person name="Fujii C.Y."/>
            <person name="Gill J.E."/>
            <person name="Goldsmith A.D."/>
            <person name="Haas B."/>
            <person name="Hansen N.F."/>
            <person name="Hughes B."/>
            <person name="Huizar L."/>
            <person name="Hunter J.L."/>
            <person name="Jenkins J."/>
            <person name="Johnson-Hopson C."/>
            <person name="Khan S."/>
            <person name="Khaykin E."/>
            <person name="Kim C.J."/>
            <person name="Koo H.L."/>
            <person name="Kremenetskaia I."/>
            <person name="Kurtz D.B."/>
            <person name="Kwan A."/>
            <person name="Lam B."/>
            <person name="Langin-Hooper S."/>
            <person name="Lee A."/>
            <person name="Lee J.M."/>
            <person name="Lenz C.A."/>
            <person name="Li J.H."/>
            <person name="Li Y.-P."/>
            <person name="Lin X."/>
            <person name="Liu S.X."/>
            <person name="Liu Z.A."/>
            <person name="Luros J.S."/>
            <person name="Maiti R."/>
            <person name="Marziali A."/>
            <person name="Militscher J."/>
            <person name="Miranda M."/>
            <person name="Nguyen M."/>
            <person name="Nierman W.C."/>
            <person name="Osborne B.I."/>
            <person name="Pai G."/>
            <person name="Peterson J."/>
            <person name="Pham P.K."/>
            <person name="Rizzo M."/>
            <person name="Rooney T."/>
            <person name="Rowley D."/>
            <person name="Sakano H."/>
            <person name="Salzberg S.L."/>
            <person name="Schwartz J.R."/>
            <person name="Shinn P."/>
            <person name="Southwick A.M."/>
            <person name="Sun H."/>
            <person name="Tallon L.J."/>
            <person name="Tambunga G."/>
            <person name="Toriumi M.J."/>
            <person name="Town C.D."/>
            <person name="Utterback T."/>
            <person name="Van Aken S."/>
            <person name="Vaysberg M."/>
            <person name="Vysotskaia V.S."/>
            <person name="Walker M."/>
            <person name="Wu D."/>
            <person name="Yu G."/>
            <person name="Fraser C.M."/>
            <person name="Venter J.C."/>
            <person name="Davis R.W."/>
        </authorList>
    </citation>
    <scope>NUCLEOTIDE SEQUENCE [LARGE SCALE GENOMIC DNA]</scope>
    <source>
        <strain>cv. Columbia</strain>
    </source>
</reference>
<reference key="3">
    <citation type="journal article" date="2017" name="Plant J.">
        <title>Araport11: a complete reannotation of the Arabidopsis thaliana reference genome.</title>
        <authorList>
            <person name="Cheng C.Y."/>
            <person name="Krishnakumar V."/>
            <person name="Chan A.P."/>
            <person name="Thibaud-Nissen F."/>
            <person name="Schobel S."/>
            <person name="Town C.D."/>
        </authorList>
    </citation>
    <scope>GENOME REANNOTATION</scope>
    <source>
        <strain>cv. Columbia</strain>
    </source>
</reference>
<reference key="4">
    <citation type="journal article" date="2003" name="Science">
        <title>Empirical analysis of transcriptional activity in the Arabidopsis genome.</title>
        <authorList>
            <person name="Yamada K."/>
            <person name="Lim J."/>
            <person name="Dale J.M."/>
            <person name="Chen H."/>
            <person name="Shinn P."/>
            <person name="Palm C.J."/>
            <person name="Southwick A.M."/>
            <person name="Wu H.C."/>
            <person name="Kim C.J."/>
            <person name="Nguyen M."/>
            <person name="Pham P.K."/>
            <person name="Cheuk R.F."/>
            <person name="Karlin-Newmann G."/>
            <person name="Liu S.X."/>
            <person name="Lam B."/>
            <person name="Sakano H."/>
            <person name="Wu T."/>
            <person name="Yu G."/>
            <person name="Miranda M."/>
            <person name="Quach H.L."/>
            <person name="Tripp M."/>
            <person name="Chang C.H."/>
            <person name="Lee J.M."/>
            <person name="Toriumi M.J."/>
            <person name="Chan M.M."/>
            <person name="Tang C.C."/>
            <person name="Onodera C.S."/>
            <person name="Deng J.M."/>
            <person name="Akiyama K."/>
            <person name="Ansari Y."/>
            <person name="Arakawa T."/>
            <person name="Banh J."/>
            <person name="Banno F."/>
            <person name="Bowser L."/>
            <person name="Brooks S.Y."/>
            <person name="Carninci P."/>
            <person name="Chao Q."/>
            <person name="Choy N."/>
            <person name="Enju A."/>
            <person name="Goldsmith A.D."/>
            <person name="Gurjal M."/>
            <person name="Hansen N.F."/>
            <person name="Hayashizaki Y."/>
            <person name="Johnson-Hopson C."/>
            <person name="Hsuan V.W."/>
            <person name="Iida K."/>
            <person name="Karnes M."/>
            <person name="Khan S."/>
            <person name="Koesema E."/>
            <person name="Ishida J."/>
            <person name="Jiang P.X."/>
            <person name="Jones T."/>
            <person name="Kawai J."/>
            <person name="Kamiya A."/>
            <person name="Meyers C."/>
            <person name="Nakajima M."/>
            <person name="Narusaka M."/>
            <person name="Seki M."/>
            <person name="Sakurai T."/>
            <person name="Satou M."/>
            <person name="Tamse R."/>
            <person name="Vaysberg M."/>
            <person name="Wallender E.K."/>
            <person name="Wong C."/>
            <person name="Yamamura Y."/>
            <person name="Yuan S."/>
            <person name="Shinozaki K."/>
            <person name="Davis R.W."/>
            <person name="Theologis A."/>
            <person name="Ecker J.R."/>
        </authorList>
    </citation>
    <scope>NUCLEOTIDE SEQUENCE [LARGE SCALE MRNA] (ISOFORMS MDAR5 AND MDAR6)</scope>
    <source>
        <strain>cv. Columbia</strain>
    </source>
</reference>
<reference key="5">
    <citation type="journal article" date="2002" name="Plant Cell Physiol.">
        <title>The use of multiple transcription starts causes the dual targeting of Arabidopsis putative monodehydroascorbate reductase to both mitochondria and chloroplasts.</title>
        <authorList>
            <person name="Obara K."/>
            <person name="Sumi K."/>
            <person name="Fukuda H."/>
        </authorList>
    </citation>
    <scope>ALTERNATIVE SPLICING (ISOFORMS MDAR5 AND MDAR6)</scope>
    <scope>SUBCELLULAR LOCATION(ISOFORMS MDAR5 AND MDAR6)</scope>
</reference>
<reference key="6">
    <citation type="journal article" date="2005" name="Plant J.">
        <title>Arabidopsis peroxisomes possess functionally redundant membrane and matrix isoforms of monodehydroascorbate reductase.</title>
        <authorList>
            <person name="Lisenbee C.S."/>
            <person name="Lingard M.J."/>
            <person name="Trelease R.N."/>
        </authorList>
    </citation>
    <scope>GENE FAMILY</scope>
    <scope>NOMENCLATURE</scope>
</reference>
<reference key="7">
    <citation type="journal article" date="2010" name="Proteomics">
        <title>Thioredoxin targets in Arabidopsis roots.</title>
        <authorList>
            <person name="Marchand C.H."/>
            <person name="Vanacker H."/>
            <person name="Collin V."/>
            <person name="Issakidis-Bourguet E."/>
            <person name="Marechal P.L."/>
            <person name="Decottignies P."/>
        </authorList>
    </citation>
    <scope>INTERACTION WITH TRXY</scope>
    <scope>ACTIVITY REGULATION</scope>
</reference>
<reference key="8">
    <citation type="journal article" date="2015" name="J. Exp. Bot.">
        <title>Identification of cleavage sites and substrate proteins for two mitochondrial intermediate peptidases in Arabidopsis thaliana.</title>
        <authorList>
            <person name="Carrie C."/>
            <person name="Venne A.S."/>
            <person name="Zahedi R.P."/>
            <person name="Soll J."/>
        </authorList>
    </citation>
    <scope>IDENTIFICATION BY MASS SPECTROMETRY</scope>
    <scope>CLEAVAGE OF TRANSIT PEPTIDE AFTER LEU-51</scope>
</reference>
<reference key="9">
    <citation type="journal article" date="2015" name="Science">
        <title>Monodehydroascorbate reductase mediates TNT toxicity in plants.</title>
        <authorList>
            <person name="Johnston E.J."/>
            <person name="Rylott E.L."/>
            <person name="Beynon E."/>
            <person name="Lorenz A."/>
            <person name="Chechik V."/>
            <person name="Bruce N.C."/>
        </authorList>
    </citation>
    <scope>FUNCTION</scope>
    <scope>CATALYTIC ACTIVITY</scope>
    <scope>SUBCELLULAR LOCATION</scope>
    <scope>BIOTECHNOLOGY</scope>
    <scope>DISRUPTION PHENOTYPE</scope>
    <scope>BIOPHYSICOCHEMICAL PROPERTIES</scope>
</reference>
<accession>P92947</accession>
<accession>Q94CE2</accession>
<accession>Q9CAK5</accession>
<organism>
    <name type="scientific">Arabidopsis thaliana</name>
    <name type="common">Mouse-ear cress</name>
    <dbReference type="NCBI Taxonomy" id="3702"/>
    <lineage>
        <taxon>Eukaryota</taxon>
        <taxon>Viridiplantae</taxon>
        <taxon>Streptophyta</taxon>
        <taxon>Embryophyta</taxon>
        <taxon>Tracheophyta</taxon>
        <taxon>Spermatophyta</taxon>
        <taxon>Magnoliopsida</taxon>
        <taxon>eudicotyledons</taxon>
        <taxon>Gunneridae</taxon>
        <taxon>Pentapetalae</taxon>
        <taxon>rosids</taxon>
        <taxon>malvids</taxon>
        <taxon>Brassicales</taxon>
        <taxon>Brassicaceae</taxon>
        <taxon>Camelineae</taxon>
        <taxon>Arabidopsis</taxon>
    </lineage>
</organism>
<comment type="function">
    <text evidence="5">Catalyzes the conversion of monodehydroascorbate (MDA) to ascorbate, oxidizing NADH in the process (PubMed:26339024). Mediates phytotoxicity of 2,4,6-trinitrotoluene (TNT), an explosive and environmental pollutant, by reducing TNT and forming a nitro radical that spontaneously reacts with atmospheric oxygen, generating reactive superoxide (PubMed:26339024). Can also use 1-chloro-2,4-dinitrobenzene (CDNB) as substrate, but not 1-chloro-4-nitrobenzene (CNB) (PubMed:26339024).</text>
</comment>
<comment type="catalytic activity">
    <reaction evidence="5">
        <text>2 monodehydro-L-ascorbate radical + NADH + H(+) = 2 L-ascorbate + NAD(+)</text>
        <dbReference type="Rhea" id="RHEA:14581"/>
        <dbReference type="ChEBI" id="CHEBI:15378"/>
        <dbReference type="ChEBI" id="CHEBI:38290"/>
        <dbReference type="ChEBI" id="CHEBI:57540"/>
        <dbReference type="ChEBI" id="CHEBI:57945"/>
        <dbReference type="ChEBI" id="CHEBI:59513"/>
        <dbReference type="EC" id="1.6.5.4"/>
    </reaction>
    <physiologicalReaction direction="left-to-right" evidence="5">
        <dbReference type="Rhea" id="RHEA:14582"/>
    </physiologicalReaction>
</comment>
<comment type="catalytic activity">
    <reaction evidence="5">
        <text>2,4,6-trinitrotoluene + NADH = 2,4,6-trinitrotoluene radical + e(-) + NAD(+)</text>
        <dbReference type="Rhea" id="RHEA:80511"/>
        <dbReference type="ChEBI" id="CHEBI:10545"/>
        <dbReference type="ChEBI" id="CHEBI:46053"/>
        <dbReference type="ChEBI" id="CHEBI:57540"/>
        <dbReference type="ChEBI" id="CHEBI:57945"/>
        <dbReference type="ChEBI" id="CHEBI:231530"/>
    </reaction>
    <physiologicalReaction direction="left-to-right" evidence="5">
        <dbReference type="Rhea" id="RHEA:80512"/>
    </physiologicalReaction>
</comment>
<comment type="cofactor">
    <cofactor evidence="2">
        <name>FAD</name>
        <dbReference type="ChEBI" id="CHEBI:57692"/>
    </cofactor>
</comment>
<comment type="activity regulation">
    <text evidence="4">Redox regulation of the activity by thioredoxin TRXy1.</text>
</comment>
<comment type="biophysicochemical properties">
    <kinetics>
        <KM evidence="5">522 uM for 2,4,6-trinitrotoluene</KM>
        <KM evidence="5">4.1 uM for monodehydroascorbate</KM>
        <KM evidence="5">1254 uM for 1-chloro-2,4-dinitrobenzene</KM>
        <Vmax evidence="5">0.143 mmol/min/mg enzyme with 2,4,6-trinitrotoluene as substrate</Vmax>
        <Vmax evidence="5">109.0 mmol/min/mg enzyme with monodehydroascorbate as substrate</Vmax>
        <Vmax evidence="5">0.96 mmol/min/mg enzyme with 1-chloro-2,4-dinitrobenzene as substrate</Vmax>
    </kinetics>
</comment>
<comment type="subunit">
    <text evidence="4">Interacts in vitro with TRXy.</text>
</comment>
<comment type="subcellular location">
    <molecule>Isoform MDAR6</molecule>
    <subcellularLocation>
        <location evidence="3">Plastid</location>
        <location evidence="3">Chloroplast</location>
    </subcellularLocation>
</comment>
<comment type="subcellular location">
    <molecule>Isoform MDAR5</molecule>
    <subcellularLocation>
        <location evidence="3 11">Mitochondrion</location>
    </subcellularLocation>
</comment>
<comment type="alternative products">
    <event type="alternative promoter"/>
    <isoform>
        <id>P92947-1</id>
        <name>MDAR5</name>
        <name>PMDAR-L</name>
        <sequence type="displayed"/>
    </isoform>
    <isoform>
        <id>P92947-2</id>
        <name>MDAR6</name>
        <name>PMDAR-S</name>
        <sequence type="described" ref="VSP_011360"/>
    </isoform>
</comment>
<comment type="disruption phenotype">
    <text evidence="5">No visible phenotype under normal conditions, but enhanced 2,4,6-trinitrotoluene (TNT) tolerance.</text>
</comment>
<comment type="biotechnology">
    <text evidence="5">The main mechanism for TNT toxicity in plants is the production of superoxide in the mitochondria by MDAR5 with TNT as a substrate. Inactivation of MDAR5 enhance TNT tolerance, thus enabling revegetation and remediation of explosives-contaminated sites.</text>
</comment>
<comment type="miscellaneous">
    <text evidence="3">The use of alternative transcription starts causes dual targeting of the same mature MDAR protein to both mitochondria and chloroplast.</text>
</comment>
<comment type="similarity">
    <text evidence="10">Belongs to the FAD-dependent oxidoreductase family.</text>
</comment>
<protein>
    <recommendedName>
        <fullName evidence="8">Monodehydroascorbate reductase, chloroplastic/mitochondrial</fullName>
        <ecNumber evidence="5">1.6.5.4</ecNumber>
    </recommendedName>
    <alternativeName>
        <fullName evidence="8">Monodehydroascorbate reductase 5, mitochondrial</fullName>
        <shortName evidence="8">AtMDAR5</shortName>
    </alternativeName>
    <alternativeName>
        <fullName evidence="8">Monodehydroascorbate reductase 6, chloroplastic</fullName>
        <shortName evidence="8">AtMDAR6</shortName>
    </alternativeName>
</protein>
<evidence type="ECO:0000250" key="1">
    <source>
        <dbReference type="UniProtKB" id="Q652L6"/>
    </source>
</evidence>
<evidence type="ECO:0000250" key="2">
    <source>
        <dbReference type="UniProtKB" id="Q9S926"/>
    </source>
</evidence>
<evidence type="ECO:0000269" key="3">
    <source>
    </source>
</evidence>
<evidence type="ECO:0000269" key="4">
    <source>
    </source>
</evidence>
<evidence type="ECO:0000269" key="5">
    <source>
    </source>
</evidence>
<evidence type="ECO:0000303" key="6">
    <source>
    </source>
</evidence>
<evidence type="ECO:0000303" key="7">
    <source>
    </source>
</evidence>
<evidence type="ECO:0000303" key="8">
    <source>
    </source>
</evidence>
<evidence type="ECO:0000303" key="9">
    <source>
    </source>
</evidence>
<evidence type="ECO:0000305" key="10"/>
<evidence type="ECO:0000305" key="11">
    <source>
    </source>
</evidence>
<evidence type="ECO:0000312" key="12">
    <source>
        <dbReference type="Araport" id="AT1G63940"/>
    </source>
</evidence>
<evidence type="ECO:0000312" key="13">
    <source>
        <dbReference type="EMBL" id="AAG52455.1"/>
    </source>
</evidence>
<gene>
    <name evidence="8" type="primary">MDAR5</name>
    <name evidence="8" type="synonym">MDAR6</name>
    <name evidence="9" type="synonym">MDHAR6</name>
    <name evidence="6" type="synonym">PMDAR-L</name>
    <name evidence="6" type="synonym">PMDAR-S</name>
    <name evidence="12" type="ordered locus">At1g63940</name>
    <name evidence="13" type="ORF">T12P18.4</name>
</gene>
<sequence>MSAVRRVMALASTTLPTKSGLSLWCPSSPSLARRFPARFSPIGSRIASRSLVTASFANENREFVIVGGGNAAGYAARTFVENGMADGRLCIVTKEAYAPYERPALTKAYLFPPEKKPARLPGFHTCVGGGGERQTPDWYKEKGIEVIYEDPVAGADFEKQTLTTDAGKQLKYGSLIIATGCTASRFPDKIGGHLPGVHYIREVADADSLIASLGKAKKIVIVGGGYIGMEVAAAAVAWNLDTTIVFPEDQLLQRLFTPSLAQKYEELYRQNGVKFVKGASINNLEAGSDGRVSAVKLADGSTIEADTVVIGIGAKPAIGPFETLAMNKSIGGIQVDGLFRTSTPGIFAIGDVAAFPLKIYDRMTRVEHVDHARRSAQHCVKSLLTAHTDTYDYLPYFYSRVFEYEGSPRKVWWQFFGDNVGETVEVGNFDPKIATFWIESGRLKGVLVESGSPEEFQLLPKLARSQPLVDKAKLASASSVEEALEIAQAALQS</sequence>
<name>MDAR_ARATH</name>